<accession>P0A8D5</accession>
<accession>P52088</accession>
<accession>P75703</accession>
<accession>Q8XEB0</accession>
<keyword id="KW-1185">Reference proteome</keyword>
<proteinExistence type="inferred from homology"/>
<gene>
    <name type="primary">yaiI</name>
    <name type="ordered locus">Z0483</name>
    <name type="ordered locus">ECs0436</name>
</gene>
<comment type="similarity">
    <text evidence="1">Belongs to the UPF0178 family.</text>
</comment>
<comment type="sequence caution" evidence="1">
    <conflict type="erroneous initiation">
        <sequence resource="EMBL-CDS" id="AAG54733"/>
    </conflict>
</comment>
<comment type="sequence caution" evidence="1">
    <conflict type="erroneous initiation">
        <sequence resource="EMBL-CDS" id="BAB33860"/>
    </conflict>
</comment>
<name>YAII_ECO57</name>
<dbReference type="EMBL" id="AE005174">
    <property type="protein sequence ID" value="AAG54733.1"/>
    <property type="status" value="ALT_INIT"/>
    <property type="molecule type" value="Genomic_DNA"/>
</dbReference>
<dbReference type="EMBL" id="BA000007">
    <property type="protein sequence ID" value="BAB33860.1"/>
    <property type="status" value="ALT_INIT"/>
    <property type="molecule type" value="Genomic_DNA"/>
</dbReference>
<dbReference type="RefSeq" id="NP_308464.2">
    <property type="nucleotide sequence ID" value="NC_002695.1"/>
</dbReference>
<dbReference type="RefSeq" id="WP_000158159.1">
    <property type="nucleotide sequence ID" value="NZ_VOAI01000005.1"/>
</dbReference>
<dbReference type="STRING" id="155864.Z0483"/>
<dbReference type="KEGG" id="ece:Z0483"/>
<dbReference type="KEGG" id="ecs:ECs_0436"/>
<dbReference type="PATRIC" id="fig|386585.9.peg.533"/>
<dbReference type="eggNOG" id="COG1671">
    <property type="taxonomic scope" value="Bacteria"/>
</dbReference>
<dbReference type="HOGENOM" id="CLU_106619_1_0_6"/>
<dbReference type="OMA" id="CPVKDEI"/>
<dbReference type="Proteomes" id="UP000000558">
    <property type="component" value="Chromosome"/>
</dbReference>
<dbReference type="Proteomes" id="UP000002519">
    <property type="component" value="Chromosome"/>
</dbReference>
<dbReference type="CDD" id="cd18720">
    <property type="entry name" value="PIN_YqxD-like"/>
    <property type="match status" value="1"/>
</dbReference>
<dbReference type="HAMAP" id="MF_00489">
    <property type="entry name" value="UPF0178"/>
    <property type="match status" value="1"/>
</dbReference>
<dbReference type="InterPro" id="IPR003791">
    <property type="entry name" value="UPF0178"/>
</dbReference>
<dbReference type="NCBIfam" id="NF001095">
    <property type="entry name" value="PRK00124.1"/>
    <property type="match status" value="1"/>
</dbReference>
<dbReference type="PANTHER" id="PTHR35146">
    <property type="entry name" value="UPF0178 PROTEIN YAII"/>
    <property type="match status" value="1"/>
</dbReference>
<dbReference type="PANTHER" id="PTHR35146:SF1">
    <property type="entry name" value="UPF0178 PROTEIN YAII"/>
    <property type="match status" value="1"/>
</dbReference>
<dbReference type="Pfam" id="PF02639">
    <property type="entry name" value="DUF188"/>
    <property type="match status" value="1"/>
</dbReference>
<sequence length="152" mass="16969">MTIWVDADACPNVIKEILYRAAERMQMPLVLVANQSLRVPPSRFIRTLRVAAGFDVADNEIVRQCEAGDLVITADIPLAAEAIEKGAAALNPRGERYTPATIRERLTMRDFMDTLRASGIQTGGPDSLSQRDRQAFAAELEKWWLEVQRSRG</sequence>
<organism>
    <name type="scientific">Escherichia coli O157:H7</name>
    <dbReference type="NCBI Taxonomy" id="83334"/>
    <lineage>
        <taxon>Bacteria</taxon>
        <taxon>Pseudomonadati</taxon>
        <taxon>Pseudomonadota</taxon>
        <taxon>Gammaproteobacteria</taxon>
        <taxon>Enterobacterales</taxon>
        <taxon>Enterobacteriaceae</taxon>
        <taxon>Escherichia</taxon>
    </lineage>
</organism>
<reference key="1">
    <citation type="journal article" date="2001" name="Nature">
        <title>Genome sequence of enterohaemorrhagic Escherichia coli O157:H7.</title>
        <authorList>
            <person name="Perna N.T."/>
            <person name="Plunkett G. III"/>
            <person name="Burland V."/>
            <person name="Mau B."/>
            <person name="Glasner J.D."/>
            <person name="Rose D.J."/>
            <person name="Mayhew G.F."/>
            <person name="Evans P.S."/>
            <person name="Gregor J."/>
            <person name="Kirkpatrick H.A."/>
            <person name="Posfai G."/>
            <person name="Hackett J."/>
            <person name="Klink S."/>
            <person name="Boutin A."/>
            <person name="Shao Y."/>
            <person name="Miller L."/>
            <person name="Grotbeck E.J."/>
            <person name="Davis N.W."/>
            <person name="Lim A."/>
            <person name="Dimalanta E.T."/>
            <person name="Potamousis K."/>
            <person name="Apodaca J."/>
            <person name="Anantharaman T.S."/>
            <person name="Lin J."/>
            <person name="Yen G."/>
            <person name="Schwartz D.C."/>
            <person name="Welch R.A."/>
            <person name="Blattner F.R."/>
        </authorList>
    </citation>
    <scope>NUCLEOTIDE SEQUENCE [LARGE SCALE GENOMIC DNA]</scope>
    <source>
        <strain>O157:H7 / EDL933 / ATCC 700927 / EHEC</strain>
    </source>
</reference>
<reference key="2">
    <citation type="journal article" date="2001" name="DNA Res.">
        <title>Complete genome sequence of enterohemorrhagic Escherichia coli O157:H7 and genomic comparison with a laboratory strain K-12.</title>
        <authorList>
            <person name="Hayashi T."/>
            <person name="Makino K."/>
            <person name="Ohnishi M."/>
            <person name="Kurokawa K."/>
            <person name="Ishii K."/>
            <person name="Yokoyama K."/>
            <person name="Han C.-G."/>
            <person name="Ohtsubo E."/>
            <person name="Nakayama K."/>
            <person name="Murata T."/>
            <person name="Tanaka M."/>
            <person name="Tobe T."/>
            <person name="Iida T."/>
            <person name="Takami H."/>
            <person name="Honda T."/>
            <person name="Sasakawa C."/>
            <person name="Ogasawara N."/>
            <person name="Yasunaga T."/>
            <person name="Kuhara S."/>
            <person name="Shiba T."/>
            <person name="Hattori M."/>
            <person name="Shinagawa H."/>
        </authorList>
    </citation>
    <scope>NUCLEOTIDE SEQUENCE [LARGE SCALE GENOMIC DNA]</scope>
    <source>
        <strain>O157:H7 / Sakai / RIMD 0509952 / EHEC</strain>
    </source>
</reference>
<evidence type="ECO:0000305" key="1"/>
<feature type="chain" id="PRO_0000175980" description="UPF0178 protein YaiI">
    <location>
        <begin position="1"/>
        <end position="152"/>
    </location>
</feature>
<protein>
    <recommendedName>
        <fullName>UPF0178 protein YaiI</fullName>
    </recommendedName>
</protein>